<organism>
    <name type="scientific">Pseudomonas aeruginosa (strain ATCC 15692 / DSM 22644 / CIP 104116 / JCM 14847 / LMG 12228 / 1C / PRS 101 / PAO1)</name>
    <dbReference type="NCBI Taxonomy" id="208964"/>
    <lineage>
        <taxon>Bacteria</taxon>
        <taxon>Pseudomonadati</taxon>
        <taxon>Pseudomonadota</taxon>
        <taxon>Gammaproteobacteria</taxon>
        <taxon>Pseudomonadales</taxon>
        <taxon>Pseudomonadaceae</taxon>
        <taxon>Pseudomonas</taxon>
    </lineage>
</organism>
<accession>Q9HZ71</accession>
<feature type="chain" id="PRO_0000287809" description="Small ribosomal subunit protein bS1">
    <location>
        <begin position="1"/>
        <end position="559"/>
    </location>
</feature>
<feature type="domain" description="S1 motif 1" evidence="2">
    <location>
        <begin position="21"/>
        <end position="87"/>
    </location>
</feature>
<feature type="domain" description="S1 motif 2" evidence="2">
    <location>
        <begin position="105"/>
        <end position="171"/>
    </location>
</feature>
<feature type="domain" description="S1 motif 3" evidence="2">
    <location>
        <begin position="192"/>
        <end position="260"/>
    </location>
</feature>
<feature type="domain" description="S1 motif 4" evidence="2">
    <location>
        <begin position="277"/>
        <end position="347"/>
    </location>
</feature>
<feature type="domain" description="S1 motif 5" evidence="2">
    <location>
        <begin position="364"/>
        <end position="434"/>
    </location>
</feature>
<feature type="domain" description="S1 motif 6" evidence="2">
    <location>
        <begin position="451"/>
        <end position="520"/>
    </location>
</feature>
<dbReference type="EMBL" id="AE004091">
    <property type="protein sequence ID" value="AAG06550.1"/>
    <property type="molecule type" value="Genomic_DNA"/>
</dbReference>
<dbReference type="PIR" id="C83250">
    <property type="entry name" value="C83250"/>
</dbReference>
<dbReference type="RefSeq" id="NP_251852.1">
    <property type="nucleotide sequence ID" value="NC_002516.2"/>
</dbReference>
<dbReference type="RefSeq" id="WP_003091442.1">
    <property type="nucleotide sequence ID" value="NZ_QZGE01000023.1"/>
</dbReference>
<dbReference type="SMR" id="Q9HZ71"/>
<dbReference type="FunCoup" id="Q9HZ71">
    <property type="interactions" value="701"/>
</dbReference>
<dbReference type="STRING" id="208964.PA3162"/>
<dbReference type="PaxDb" id="208964-PA3162"/>
<dbReference type="DNASU" id="882562"/>
<dbReference type="GeneID" id="77220319"/>
<dbReference type="GeneID" id="882562"/>
<dbReference type="KEGG" id="pae:PA3162"/>
<dbReference type="PATRIC" id="fig|208964.12.peg.3305"/>
<dbReference type="PseudoCAP" id="PA3162"/>
<dbReference type="HOGENOM" id="CLU_015805_2_1_6"/>
<dbReference type="InParanoid" id="Q9HZ71"/>
<dbReference type="OrthoDB" id="9804077at2"/>
<dbReference type="PhylomeDB" id="Q9HZ71"/>
<dbReference type="BioCyc" id="PAER208964:G1FZ6-3222-MONOMER"/>
<dbReference type="PRO" id="PR:Q9HZ71"/>
<dbReference type="Proteomes" id="UP000002438">
    <property type="component" value="Chromosome"/>
</dbReference>
<dbReference type="GO" id="GO:0022627">
    <property type="term" value="C:cytosolic small ribosomal subunit"/>
    <property type="evidence" value="ECO:0000318"/>
    <property type="project" value="GO_Central"/>
</dbReference>
<dbReference type="GO" id="GO:0003729">
    <property type="term" value="F:mRNA binding"/>
    <property type="evidence" value="ECO:0000318"/>
    <property type="project" value="GO_Central"/>
</dbReference>
<dbReference type="GO" id="GO:0003735">
    <property type="term" value="F:structural constituent of ribosome"/>
    <property type="evidence" value="ECO:0000318"/>
    <property type="project" value="GO_Central"/>
</dbReference>
<dbReference type="GO" id="GO:0006412">
    <property type="term" value="P:translation"/>
    <property type="evidence" value="ECO:0000318"/>
    <property type="project" value="GO_Central"/>
</dbReference>
<dbReference type="CDD" id="cd05687">
    <property type="entry name" value="S1_RPS1_repeat_ec1_hs1"/>
    <property type="match status" value="1"/>
</dbReference>
<dbReference type="CDD" id="cd04465">
    <property type="entry name" value="S1_RPS1_repeat_ec2_hs2"/>
    <property type="match status" value="1"/>
</dbReference>
<dbReference type="CDD" id="cd05688">
    <property type="entry name" value="S1_RPS1_repeat_ec3"/>
    <property type="match status" value="1"/>
</dbReference>
<dbReference type="CDD" id="cd05689">
    <property type="entry name" value="S1_RPS1_repeat_ec4"/>
    <property type="match status" value="1"/>
</dbReference>
<dbReference type="CDD" id="cd05691">
    <property type="entry name" value="S1_RPS1_repeat_ec6"/>
    <property type="match status" value="1"/>
</dbReference>
<dbReference type="FunFam" id="2.40.50.140:FF:000011">
    <property type="entry name" value="30S ribosomal protein S1"/>
    <property type="match status" value="1"/>
</dbReference>
<dbReference type="FunFam" id="2.40.50.140:FF:000016">
    <property type="entry name" value="30S ribosomal protein S1"/>
    <property type="match status" value="1"/>
</dbReference>
<dbReference type="FunFam" id="2.40.50.140:FF:000017">
    <property type="entry name" value="30S ribosomal protein S1"/>
    <property type="match status" value="1"/>
</dbReference>
<dbReference type="FunFam" id="2.40.50.140:FF:000018">
    <property type="entry name" value="30S ribosomal protein S1"/>
    <property type="match status" value="1"/>
</dbReference>
<dbReference type="FunFam" id="2.40.50.140:FF:000021">
    <property type="entry name" value="30S ribosomal protein S1"/>
    <property type="match status" value="1"/>
</dbReference>
<dbReference type="Gene3D" id="2.40.50.140">
    <property type="entry name" value="Nucleic acid-binding proteins"/>
    <property type="match status" value="6"/>
</dbReference>
<dbReference type="InterPro" id="IPR012340">
    <property type="entry name" value="NA-bd_OB-fold"/>
</dbReference>
<dbReference type="InterPro" id="IPR050437">
    <property type="entry name" value="Ribos_protein_bS1-like"/>
</dbReference>
<dbReference type="InterPro" id="IPR000110">
    <property type="entry name" value="Ribosomal_bS1"/>
</dbReference>
<dbReference type="InterPro" id="IPR035104">
    <property type="entry name" value="Ribosomal_protein_S1-like"/>
</dbReference>
<dbReference type="InterPro" id="IPR003029">
    <property type="entry name" value="S1_domain"/>
</dbReference>
<dbReference type="NCBIfam" id="NF004951">
    <property type="entry name" value="PRK06299.1-1"/>
    <property type="match status" value="1"/>
</dbReference>
<dbReference type="NCBIfam" id="NF004952">
    <property type="entry name" value="PRK06299.1-2"/>
    <property type="match status" value="1"/>
</dbReference>
<dbReference type="NCBIfam" id="NF004954">
    <property type="entry name" value="PRK06299.1-4"/>
    <property type="match status" value="1"/>
</dbReference>
<dbReference type="NCBIfam" id="NF005208">
    <property type="entry name" value="PRK06676.1"/>
    <property type="match status" value="1"/>
</dbReference>
<dbReference type="NCBIfam" id="TIGR00717">
    <property type="entry name" value="rpsA"/>
    <property type="match status" value="1"/>
</dbReference>
<dbReference type="PANTHER" id="PTHR10724">
    <property type="entry name" value="30S RIBOSOMAL PROTEIN S1"/>
    <property type="match status" value="1"/>
</dbReference>
<dbReference type="PANTHER" id="PTHR10724:SF7">
    <property type="entry name" value="SMALL RIBOSOMAL SUBUNIT PROTEIN BS1C"/>
    <property type="match status" value="1"/>
</dbReference>
<dbReference type="Pfam" id="PF00575">
    <property type="entry name" value="S1"/>
    <property type="match status" value="6"/>
</dbReference>
<dbReference type="PRINTS" id="PR00681">
    <property type="entry name" value="RIBOSOMALS1"/>
</dbReference>
<dbReference type="SMART" id="SM00316">
    <property type="entry name" value="S1"/>
    <property type="match status" value="6"/>
</dbReference>
<dbReference type="SUPFAM" id="SSF50249">
    <property type="entry name" value="Nucleic acid-binding proteins"/>
    <property type="match status" value="6"/>
</dbReference>
<dbReference type="PROSITE" id="PS50126">
    <property type="entry name" value="S1"/>
    <property type="match status" value="6"/>
</dbReference>
<reference key="1">
    <citation type="journal article" date="2000" name="Nature">
        <title>Complete genome sequence of Pseudomonas aeruginosa PAO1, an opportunistic pathogen.</title>
        <authorList>
            <person name="Stover C.K."/>
            <person name="Pham X.-Q.T."/>
            <person name="Erwin A.L."/>
            <person name="Mizoguchi S.D."/>
            <person name="Warrener P."/>
            <person name="Hickey M.J."/>
            <person name="Brinkman F.S.L."/>
            <person name="Hufnagle W.O."/>
            <person name="Kowalik D.J."/>
            <person name="Lagrou M."/>
            <person name="Garber R.L."/>
            <person name="Goltry L."/>
            <person name="Tolentino E."/>
            <person name="Westbrock-Wadman S."/>
            <person name="Yuan Y."/>
            <person name="Brody L.L."/>
            <person name="Coulter S.N."/>
            <person name="Folger K.R."/>
            <person name="Kas A."/>
            <person name="Larbig K."/>
            <person name="Lim R.M."/>
            <person name="Smith K.A."/>
            <person name="Spencer D.H."/>
            <person name="Wong G.K.-S."/>
            <person name="Wu Z."/>
            <person name="Paulsen I.T."/>
            <person name="Reizer J."/>
            <person name="Saier M.H. Jr."/>
            <person name="Hancock R.E.W."/>
            <person name="Lory S."/>
            <person name="Olson M.V."/>
        </authorList>
    </citation>
    <scope>NUCLEOTIDE SEQUENCE [LARGE SCALE GENOMIC DNA]</scope>
    <source>
        <strain>ATCC 15692 / DSM 22644 / CIP 104116 / JCM 14847 / LMG 12228 / 1C / PRS 101 / PAO1</strain>
    </source>
</reference>
<name>RS1_PSEAE</name>
<evidence type="ECO:0000250" key="1"/>
<evidence type="ECO:0000255" key="2">
    <source>
        <dbReference type="PROSITE-ProRule" id="PRU00180"/>
    </source>
</evidence>
<evidence type="ECO:0000305" key="3"/>
<gene>
    <name type="primary">rpsA</name>
    <name type="ordered locus">PA3162</name>
</gene>
<comment type="function">
    <text evidence="1">Binds mRNA; thus facilitating recognition of the initiation point. It is needed to translate mRNA with a short Shine-Dalgarno (SD) purine-rich sequence (By similarity).</text>
</comment>
<comment type="similarity">
    <text evidence="3">Belongs to the bacterial ribosomal protein bS1 family.</text>
</comment>
<sequence>MSESFAELFEESLKSLDMQPGAIITGIVVDIDGDWVTVHAGLKSEGVIPVEQFYNEQGELTIKVGDEVHVALDAVEDGFGETKLSREKAKRAESWIVLEAAFAADEVVKGVINGKVKGGFTVDVNGIRAFLPGSLVDVRPVRDTTHLEGKELEFKVIKLDQKRNNVVVSRRSVLEAENSAEREALLESLQEGQQVKGIVKNLTDYGAFVDLGGVDGLLHITDMAWKRIKHPSEIVNVGDEIDVKVLKFDRERNRVSLGLKQLGEDPWVAIKARYPEGTRVMARVTNLTDYGCFAELEEGVEGLVHVSEMDWTNKNIHPSKVVQVGDEVEVQVLDIDEERRRISLGIKQCKSNPWEDFSSQFNKGDRISGTIKSITDFGIFIGLDGGIDGLVHLSDISWNEVGEEAVRRFKKGDELETVILSVDPERERISLGIKQLEDDPFSNYASLHEKGSIVRGTVKEVDAKGAVISLGDDIEGILKASEISRDRVEDARNVLKEGEEVEAKIISIDRKSRVISLSVKSKDVDDEKDAMKELRKQEVESAGPTTIGDLIRAQMENQG</sequence>
<protein>
    <recommendedName>
        <fullName evidence="3">Small ribosomal subunit protein bS1</fullName>
    </recommendedName>
    <alternativeName>
        <fullName>30S ribosomal protein S1</fullName>
    </alternativeName>
</protein>
<proteinExistence type="inferred from homology"/>
<keyword id="KW-1185">Reference proteome</keyword>
<keyword id="KW-0677">Repeat</keyword>
<keyword id="KW-0687">Ribonucleoprotein</keyword>
<keyword id="KW-0689">Ribosomal protein</keyword>
<keyword id="KW-0694">RNA-binding</keyword>